<keyword id="KW-0997">Cell inner membrane</keyword>
<keyword id="KW-1003">Cell membrane</keyword>
<keyword id="KW-0407">Ion channel</keyword>
<keyword id="KW-0406">Ion transport</keyword>
<keyword id="KW-0472">Membrane</keyword>
<keyword id="KW-0479">Metal-binding</keyword>
<keyword id="KW-0630">Potassium</keyword>
<keyword id="KW-0633">Potassium transport</keyword>
<keyword id="KW-1185">Reference proteome</keyword>
<keyword id="KW-0812">Transmembrane</keyword>
<keyword id="KW-1133">Transmembrane helix</keyword>
<keyword id="KW-0813">Transport</keyword>
<comment type="function">
    <text evidence="1">Low-affinity potassium transport system. Interacts with Trk system potassium uptake protein TrkA and requires TrkE for transport activity (By similarity).</text>
</comment>
<comment type="subcellular location">
    <subcellularLocation>
        <location evidence="1">Cell inner membrane</location>
        <topology evidence="1">Multi-pass membrane protein</topology>
    </subcellularLocation>
</comment>
<comment type="similarity">
    <text evidence="3">Belongs to the TrkH potassium transport family.</text>
</comment>
<name>TRKH_SALTY</name>
<gene>
    <name type="primary">trkH</name>
    <name type="ordered locus">STM3986</name>
    <name type="ORF">STMD1.3</name>
</gene>
<accession>Q9L6L2</accession>
<reference key="1">
    <citation type="journal article" date="2001" name="Nature">
        <title>Complete genome sequence of Salmonella enterica serovar Typhimurium LT2.</title>
        <authorList>
            <person name="McClelland M."/>
            <person name="Sanderson K.E."/>
            <person name="Spieth J."/>
            <person name="Clifton S.W."/>
            <person name="Latreille P."/>
            <person name="Courtney L."/>
            <person name="Porwollik S."/>
            <person name="Ali J."/>
            <person name="Dante M."/>
            <person name="Du F."/>
            <person name="Hou S."/>
            <person name="Layman D."/>
            <person name="Leonard S."/>
            <person name="Nguyen C."/>
            <person name="Scott K."/>
            <person name="Holmes A."/>
            <person name="Grewal N."/>
            <person name="Mulvaney E."/>
            <person name="Ryan E."/>
            <person name="Sun H."/>
            <person name="Florea L."/>
            <person name="Miller W."/>
            <person name="Stoneking T."/>
            <person name="Nhan M."/>
            <person name="Waterston R."/>
            <person name="Wilson R.K."/>
        </authorList>
    </citation>
    <scope>NUCLEOTIDE SEQUENCE [LARGE SCALE GENOMIC DNA]</scope>
    <source>
        <strain>LT2 / SGSC1412 / ATCC 700720</strain>
    </source>
</reference>
<feature type="chain" id="PRO_0000070478" description="Trk system potassium uptake protein TrkH">
    <location>
        <begin position="1"/>
        <end position="483"/>
    </location>
</feature>
<feature type="topological domain" description="Cytoplasmic" evidence="1">
    <location>
        <begin position="1"/>
        <end position="2"/>
    </location>
</feature>
<feature type="transmembrane region" description="Helical" evidence="1">
    <location>
        <begin position="3"/>
        <end position="29"/>
    </location>
</feature>
<feature type="topological domain" description="Periplasmic" evidence="1">
    <location>
        <begin position="30"/>
        <end position="35"/>
    </location>
</feature>
<feature type="transmembrane region" description="Helical" evidence="1">
    <location>
        <begin position="36"/>
        <end position="57"/>
    </location>
</feature>
<feature type="topological domain" description="Cytoplasmic" evidence="1">
    <location>
        <begin position="58"/>
        <end position="65"/>
    </location>
</feature>
<feature type="transmembrane region" description="Helical" evidence="1">
    <location>
        <begin position="66"/>
        <end position="90"/>
    </location>
</feature>
<feature type="topological domain" description="Periplasmic" evidence="1">
    <location>
        <begin position="91"/>
        <end status="unknown"/>
    </location>
</feature>
<feature type="intramembrane region" evidence="1">
    <location>
        <begin status="unknown"/>
        <end position="97"/>
    </location>
</feature>
<feature type="intramembrane region" description="Helical; Pore-forming" evidence="1">
    <location>
        <begin position="98"/>
        <end position="109"/>
    </location>
</feature>
<feature type="intramembrane region" evidence="1">
    <location>
        <begin position="110"/>
        <end position="115"/>
    </location>
</feature>
<feature type="topological domain" description="Periplasmic" evidence="1">
    <location>
        <begin position="116"/>
        <end position="124"/>
    </location>
</feature>
<feature type="transmembrane region" description="Helical" evidence="1">
    <location>
        <begin position="125"/>
        <end position="150"/>
    </location>
</feature>
<feature type="topological domain" description="Cytoplasmic" evidence="1">
    <location>
        <begin position="151"/>
        <end position="177"/>
    </location>
</feature>
<feature type="transmembrane region" description="Helical" evidence="1">
    <location>
        <begin position="178"/>
        <end position="202"/>
    </location>
</feature>
<feature type="topological domain" description="Periplasmic" evidence="1">
    <location>
        <begin position="203"/>
        <end position="205"/>
    </location>
</feature>
<feature type="intramembrane region" evidence="1">
    <location>
        <position position="206"/>
    </location>
</feature>
<feature type="intramembrane region" description="Helical; Pore-forming" evidence="1">
    <location>
        <begin position="207"/>
        <end position="218"/>
    </location>
</feature>
<feature type="intramembrane region" evidence="1">
    <location>
        <begin position="219"/>
        <end position="224"/>
    </location>
</feature>
<feature type="topological domain" description="Periplasmic" evidence="1">
    <location>
        <begin position="225"/>
        <end position="234"/>
    </location>
</feature>
<feature type="intramembrane region" description="Helical" evidence="1">
    <location>
        <begin position="235"/>
        <end position="250"/>
    </location>
</feature>
<feature type="intramembrane region" evidence="1">
    <location>
        <begin position="251"/>
        <end status="unknown"/>
    </location>
</feature>
<feature type="topological domain" description="Cytoplasmic" evidence="1">
    <location>
        <begin status="unknown"/>
        <end position="273"/>
    </location>
</feature>
<feature type="transmembrane region" description="Helical" evidence="1">
    <location>
        <begin position="274"/>
        <end position="294"/>
    </location>
</feature>
<feature type="topological domain" description="Periplasmic" evidence="1">
    <location>
        <begin position="295"/>
        <end status="unknown"/>
    </location>
</feature>
<feature type="intramembrane region" evidence="1">
    <location>
        <begin status="unknown"/>
        <end position="300"/>
    </location>
</feature>
<feature type="intramembrane region" description="Helical; Pore-forming" evidence="1">
    <location>
        <begin position="301"/>
        <end position="316"/>
    </location>
</feature>
<feature type="intramembrane region" evidence="1">
    <location>
        <begin position="317"/>
        <end position="322"/>
    </location>
</feature>
<feature type="topological domain" description="Periplasmic" evidence="1">
    <location>
        <begin position="323"/>
        <end position="330"/>
    </location>
</feature>
<feature type="intramembrane region" description="Helical" evidence="1">
    <location>
        <begin position="331"/>
        <end position="342"/>
    </location>
</feature>
<feature type="intramembrane region" description="Note=Loop between two helices" evidence="1">
    <location>
        <begin position="343"/>
        <end position="355"/>
    </location>
</feature>
<feature type="intramembrane region" description="Helical" evidence="1">
    <location>
        <begin position="356"/>
        <end status="unknown"/>
    </location>
</feature>
<feature type="topological domain" description="Cytoplasmic" evidence="1">
    <location>
        <begin status="unknown"/>
        <end position="389"/>
    </location>
</feature>
<feature type="transmembrane region" description="Helical" evidence="1">
    <location>
        <begin position="390"/>
        <end position="417"/>
    </location>
</feature>
<feature type="topological domain" description="Periplasmic" evidence="1">
    <location>
        <begin position="418"/>
        <end position="419"/>
    </location>
</feature>
<feature type="intramembrane region" evidence="1">
    <location>
        <begin position="420"/>
        <end position="421"/>
    </location>
</feature>
<feature type="intramembrane region" description="Helical; Pore-forming" evidence="1">
    <location>
        <begin position="422"/>
        <end position="432"/>
    </location>
</feature>
<feature type="intramembrane region" evidence="1">
    <location>
        <begin position="433"/>
        <end position="439"/>
    </location>
</feature>
<feature type="topological domain" description="Periplasmic" evidence="1">
    <location>
        <begin position="440"/>
        <end position="451"/>
    </location>
</feature>
<feature type="intramembrane region" description="Helical" evidence="1">
    <location>
        <begin position="452"/>
        <end position="463"/>
    </location>
</feature>
<feature type="intramembrane region" evidence="1">
    <location>
        <begin position="464"/>
        <end status="unknown"/>
    </location>
</feature>
<feature type="topological domain" description="Cytoplasmic" evidence="1">
    <location>
        <begin status="unknown"/>
        <end position="483"/>
    </location>
</feature>
<feature type="region of interest" description="Selectivity filter part 1" evidence="1">
    <location>
        <begin position="110"/>
        <end position="115"/>
    </location>
</feature>
<feature type="region of interest" description="Selectivity filter part 2" evidence="1">
    <location>
        <begin position="219"/>
        <end position="224"/>
    </location>
</feature>
<feature type="region of interest" description="Selectivity filter part 3" evidence="1">
    <location>
        <begin position="317"/>
        <end position="322"/>
    </location>
</feature>
<feature type="region of interest" description="Selectivity filter part 4" evidence="1">
    <location>
        <begin position="434"/>
        <end position="439"/>
    </location>
</feature>
<feature type="binding site" evidence="2">
    <location>
        <position position="111"/>
    </location>
    <ligand>
        <name>K(+)</name>
        <dbReference type="ChEBI" id="CHEBI:29103"/>
    </ligand>
</feature>
<feature type="binding site" evidence="2">
    <location>
        <position position="112"/>
    </location>
    <ligand>
        <name>K(+)</name>
        <dbReference type="ChEBI" id="CHEBI:29103"/>
    </ligand>
</feature>
<feature type="binding site" evidence="2">
    <location>
        <position position="220"/>
    </location>
    <ligand>
        <name>K(+)</name>
        <dbReference type="ChEBI" id="CHEBI:29103"/>
    </ligand>
</feature>
<feature type="binding site" evidence="2">
    <location>
        <position position="221"/>
    </location>
    <ligand>
        <name>K(+)</name>
        <dbReference type="ChEBI" id="CHEBI:29103"/>
    </ligand>
</feature>
<feature type="binding site" evidence="2">
    <location>
        <position position="318"/>
    </location>
    <ligand>
        <name>K(+)</name>
        <dbReference type="ChEBI" id="CHEBI:29103"/>
    </ligand>
</feature>
<feature type="binding site" evidence="2">
    <location>
        <position position="319"/>
    </location>
    <ligand>
        <name>K(+)</name>
        <dbReference type="ChEBI" id="CHEBI:29103"/>
    </ligand>
</feature>
<feature type="binding site" evidence="2">
    <location>
        <position position="435"/>
    </location>
    <ligand>
        <name>K(+)</name>
        <dbReference type="ChEBI" id="CHEBI:29103"/>
    </ligand>
</feature>
<feature type="binding site" evidence="2">
    <location>
        <position position="436"/>
    </location>
    <ligand>
        <name>K(+)</name>
        <dbReference type="ChEBI" id="CHEBI:29103"/>
    </ligand>
</feature>
<dbReference type="EMBL" id="AF233324">
    <property type="protein sequence ID" value="AAF33407.1"/>
    <property type="molecule type" value="Genomic_DNA"/>
</dbReference>
<dbReference type="EMBL" id="AE006468">
    <property type="protein sequence ID" value="AAL22830.1"/>
    <property type="molecule type" value="Genomic_DNA"/>
</dbReference>
<dbReference type="RefSeq" id="NP_462871.1">
    <property type="nucleotide sequence ID" value="NC_003197.2"/>
</dbReference>
<dbReference type="RefSeq" id="WP_000545688.1">
    <property type="nucleotide sequence ID" value="NC_003197.2"/>
</dbReference>
<dbReference type="SMR" id="Q9L6L2"/>
<dbReference type="STRING" id="99287.STM3986"/>
<dbReference type="PaxDb" id="99287-STM3986"/>
<dbReference type="GeneID" id="1255512"/>
<dbReference type="KEGG" id="stm:STM3986"/>
<dbReference type="PATRIC" id="fig|99287.12.peg.4205"/>
<dbReference type="HOGENOM" id="CLU_030708_0_2_6"/>
<dbReference type="OMA" id="LQWMGGM"/>
<dbReference type="PhylomeDB" id="Q9L6L2"/>
<dbReference type="BioCyc" id="SENT99287:STM3986-MONOMER"/>
<dbReference type="Proteomes" id="UP000001014">
    <property type="component" value="Chromosome"/>
</dbReference>
<dbReference type="GO" id="GO:0005886">
    <property type="term" value="C:plasma membrane"/>
    <property type="evidence" value="ECO:0000318"/>
    <property type="project" value="GO_Central"/>
</dbReference>
<dbReference type="GO" id="GO:0005267">
    <property type="term" value="F:potassium channel activity"/>
    <property type="evidence" value="ECO:0000250"/>
    <property type="project" value="UniProtKB"/>
</dbReference>
<dbReference type="GO" id="GO:0030955">
    <property type="term" value="F:potassium ion binding"/>
    <property type="evidence" value="ECO:0000250"/>
    <property type="project" value="UniProtKB"/>
</dbReference>
<dbReference type="GO" id="GO:0015079">
    <property type="term" value="F:potassium ion transmembrane transporter activity"/>
    <property type="evidence" value="ECO:0000318"/>
    <property type="project" value="GO_Central"/>
</dbReference>
<dbReference type="GO" id="GO:0015379">
    <property type="term" value="F:potassium:chloride symporter activity"/>
    <property type="evidence" value="ECO:0007669"/>
    <property type="project" value="InterPro"/>
</dbReference>
<dbReference type="GO" id="GO:0071805">
    <property type="term" value="P:potassium ion transmembrane transport"/>
    <property type="evidence" value="ECO:0000250"/>
    <property type="project" value="UniProtKB"/>
</dbReference>
<dbReference type="InterPro" id="IPR003445">
    <property type="entry name" value="Cat_transpt"/>
</dbReference>
<dbReference type="InterPro" id="IPR004772">
    <property type="entry name" value="TrkH"/>
</dbReference>
<dbReference type="NCBIfam" id="TIGR00933">
    <property type="entry name" value="2a38"/>
    <property type="match status" value="1"/>
</dbReference>
<dbReference type="NCBIfam" id="NF008020">
    <property type="entry name" value="PRK10750.1"/>
    <property type="match status" value="1"/>
</dbReference>
<dbReference type="PANTHER" id="PTHR32024">
    <property type="entry name" value="TRK SYSTEM POTASSIUM UPTAKE PROTEIN TRKG-RELATED"/>
    <property type="match status" value="1"/>
</dbReference>
<dbReference type="PANTHER" id="PTHR32024:SF2">
    <property type="entry name" value="TRK SYSTEM POTASSIUM UPTAKE PROTEIN TRKG-RELATED"/>
    <property type="match status" value="1"/>
</dbReference>
<dbReference type="Pfam" id="PF02386">
    <property type="entry name" value="TrkH"/>
    <property type="match status" value="1"/>
</dbReference>
<dbReference type="PIRSF" id="PIRSF006247">
    <property type="entry name" value="TrkH"/>
    <property type="match status" value="1"/>
</dbReference>
<proteinExistence type="inferred from homology"/>
<organism>
    <name type="scientific">Salmonella typhimurium (strain LT2 / SGSC1412 / ATCC 700720)</name>
    <dbReference type="NCBI Taxonomy" id="99287"/>
    <lineage>
        <taxon>Bacteria</taxon>
        <taxon>Pseudomonadati</taxon>
        <taxon>Pseudomonadota</taxon>
        <taxon>Gammaproteobacteria</taxon>
        <taxon>Enterobacterales</taxon>
        <taxon>Enterobacteriaceae</taxon>
        <taxon>Salmonella</taxon>
    </lineage>
</organism>
<sequence>MHFRAITRIVGLLVILFSGTMILPGLVALIYRDGAGRAFTQTFFVALAIGSILWWPNRREKGELKSREGFLIVVLFWTVLGSVGALPFIFSESPNLTITDAFFESFSGLTTTGATTLVGLDSLPHAILFYRQMLQWFGGMGIIVLAVAILPILGVGGMQLYRAEMPGPLKDNKMRPRIAETAKTLWLIYVLLTVACALALWFAGMPAFDAIGHSFSTIAIGGFSTHDASVGYFDSPTINTIIAIFLLISGCNYGLHFSLLSGRSLKVYWRDPEFRMFIGVQLTLVVICTLVLWFHNIYDSALTTLNQAFFQVVSMATTAGFTTDSIARWPLFLPVLLLCSAFIGGCAGSTGGGLKVIRILLLFKQGNRELKRLVHPNAVYSIKLGNRALPERILEAVWGFFSAYALVFIVSMLAIIATGVDDFSAFASVVATLNNLGPGLGVVADNFASMNPVAKWILIANMLFGRLEVFTLLVLFTPTFWRE</sequence>
<protein>
    <recommendedName>
        <fullName>Trk system potassium uptake protein TrkH</fullName>
    </recommendedName>
</protein>
<evidence type="ECO:0000250" key="1"/>
<evidence type="ECO:0000250" key="2">
    <source>
        <dbReference type="UniProtKB" id="Q87TN7"/>
    </source>
</evidence>
<evidence type="ECO:0000305" key="3"/>